<organism>
    <name type="scientific">Humulus lupulus</name>
    <name type="common">European hop</name>
    <dbReference type="NCBI Taxonomy" id="3486"/>
    <lineage>
        <taxon>Eukaryota</taxon>
        <taxon>Viridiplantae</taxon>
        <taxon>Streptophyta</taxon>
        <taxon>Embryophyta</taxon>
        <taxon>Tracheophyta</taxon>
        <taxon>Spermatophyta</taxon>
        <taxon>Magnoliopsida</taxon>
        <taxon>eudicotyledons</taxon>
        <taxon>Gunneridae</taxon>
        <taxon>Pentapetalae</taxon>
        <taxon>rosids</taxon>
        <taxon>fabids</taxon>
        <taxon>Rosales</taxon>
        <taxon>Cannabaceae</taxon>
        <taxon>Humulus</taxon>
    </lineage>
</organism>
<name>CCL8_HUMLU</name>
<protein>
    <recommendedName>
        <fullName evidence="6">Probable CoA ligase CCL8</fullName>
        <shortName evidence="4">HlCCL8</shortName>
        <ecNumber evidence="6">6.2.1.-</ecNumber>
    </recommendedName>
</protein>
<feature type="chain" id="PRO_0000452953" description="Probable CoA ligase CCL8">
    <location>
        <begin position="1"/>
        <end position="607"/>
    </location>
</feature>
<feature type="region of interest" description="SBD1" evidence="1">
    <location>
        <begin position="305"/>
        <end position="391"/>
    </location>
</feature>
<feature type="region of interest" description="SBD2" evidence="1">
    <location>
        <begin position="392"/>
        <end position="453"/>
    </location>
</feature>
<feature type="binding site" evidence="2">
    <location>
        <begin position="236"/>
        <end position="244"/>
    </location>
    <ligand>
        <name>ATP</name>
        <dbReference type="ChEBI" id="CHEBI:30616"/>
    </ligand>
</feature>
<feature type="binding site" evidence="2">
    <location>
        <begin position="391"/>
        <end position="396"/>
    </location>
    <ligand>
        <name>ATP</name>
        <dbReference type="ChEBI" id="CHEBI:30616"/>
    </ligand>
</feature>
<feature type="binding site" evidence="2">
    <location>
        <position position="474"/>
    </location>
    <ligand>
        <name>ATP</name>
        <dbReference type="ChEBI" id="CHEBI:30616"/>
    </ligand>
</feature>
<feature type="binding site" evidence="2">
    <location>
        <begin position="486"/>
        <end position="489"/>
    </location>
    <ligand>
        <name>ATP</name>
        <dbReference type="ChEBI" id="CHEBI:30616"/>
    </ligand>
</feature>
<feature type="binding site" evidence="2">
    <location>
        <position position="591"/>
    </location>
    <ligand>
        <name>ATP</name>
        <dbReference type="ChEBI" id="CHEBI:30616"/>
    </ligand>
</feature>
<dbReference type="EC" id="6.2.1.-" evidence="6"/>
<dbReference type="EMBL" id="JQ740210">
    <property type="protein sequence ID" value="AGA17925.1"/>
    <property type="molecule type" value="mRNA"/>
</dbReference>
<dbReference type="SMR" id="M4IS90"/>
<dbReference type="GO" id="GO:0005829">
    <property type="term" value="C:cytosol"/>
    <property type="evidence" value="ECO:0000314"/>
    <property type="project" value="UniProtKB"/>
</dbReference>
<dbReference type="GO" id="GO:0005524">
    <property type="term" value="F:ATP binding"/>
    <property type="evidence" value="ECO:0007669"/>
    <property type="project" value="UniProtKB-KW"/>
</dbReference>
<dbReference type="GO" id="GO:0016405">
    <property type="term" value="F:CoA-ligase activity"/>
    <property type="evidence" value="ECO:0000250"/>
    <property type="project" value="UniProtKB"/>
</dbReference>
<dbReference type="GO" id="GO:0031956">
    <property type="term" value="F:medium-chain fatty acid-CoA ligase activity"/>
    <property type="evidence" value="ECO:0007669"/>
    <property type="project" value="TreeGrafter"/>
</dbReference>
<dbReference type="GO" id="GO:0006631">
    <property type="term" value="P:fatty acid metabolic process"/>
    <property type="evidence" value="ECO:0007669"/>
    <property type="project" value="TreeGrafter"/>
</dbReference>
<dbReference type="CDD" id="cd05941">
    <property type="entry name" value="MCS"/>
    <property type="match status" value="1"/>
</dbReference>
<dbReference type="FunFam" id="3.40.50.12780:FF:000030">
    <property type="entry name" value="Acyl-CoA synthetase family member 3"/>
    <property type="match status" value="1"/>
</dbReference>
<dbReference type="Gene3D" id="3.30.300.30">
    <property type="match status" value="1"/>
</dbReference>
<dbReference type="Gene3D" id="3.40.50.12780">
    <property type="entry name" value="N-terminal domain of ligase-like"/>
    <property type="match status" value="1"/>
</dbReference>
<dbReference type="InterPro" id="IPR025110">
    <property type="entry name" value="AMP-bd_C"/>
</dbReference>
<dbReference type="InterPro" id="IPR045851">
    <property type="entry name" value="AMP-bd_C_sf"/>
</dbReference>
<dbReference type="InterPro" id="IPR020845">
    <property type="entry name" value="AMP-binding_CS"/>
</dbReference>
<dbReference type="InterPro" id="IPR000873">
    <property type="entry name" value="AMP-dep_synth/lig_dom"/>
</dbReference>
<dbReference type="InterPro" id="IPR042099">
    <property type="entry name" value="ANL_N_sf"/>
</dbReference>
<dbReference type="PANTHER" id="PTHR43201">
    <property type="entry name" value="ACYL-COA SYNTHETASE"/>
    <property type="match status" value="1"/>
</dbReference>
<dbReference type="PANTHER" id="PTHR43201:SF8">
    <property type="entry name" value="ACYL-COA SYNTHETASE FAMILY MEMBER 3"/>
    <property type="match status" value="1"/>
</dbReference>
<dbReference type="Pfam" id="PF00501">
    <property type="entry name" value="AMP-binding"/>
    <property type="match status" value="1"/>
</dbReference>
<dbReference type="Pfam" id="PF13193">
    <property type="entry name" value="AMP-binding_C"/>
    <property type="match status" value="1"/>
</dbReference>
<dbReference type="SUPFAM" id="SSF56801">
    <property type="entry name" value="Acetyl-CoA synthetase-like"/>
    <property type="match status" value="1"/>
</dbReference>
<dbReference type="PROSITE" id="PS00455">
    <property type="entry name" value="AMP_BINDING"/>
    <property type="match status" value="1"/>
</dbReference>
<evidence type="ECO:0000250" key="1">
    <source>
        <dbReference type="UniProtKB" id="Q42524"/>
    </source>
</evidence>
<evidence type="ECO:0000250" key="2">
    <source>
        <dbReference type="UniProtKB" id="Q81G39"/>
    </source>
</evidence>
<evidence type="ECO:0000269" key="3">
    <source>
    </source>
</evidence>
<evidence type="ECO:0000303" key="4">
    <source>
    </source>
</evidence>
<evidence type="ECO:0000305" key="5"/>
<evidence type="ECO:0000305" key="6">
    <source>
    </source>
</evidence>
<keyword id="KW-0067">ATP-binding</keyword>
<keyword id="KW-0963">Cytoplasm</keyword>
<keyword id="KW-0436">Ligase</keyword>
<keyword id="KW-0547">Nucleotide-binding</keyword>
<accession>M4IS90</accession>
<comment type="subcellular location">
    <subcellularLocation>
        <location evidence="3">Cytoplasm</location>
        <location evidence="3">Cytosol</location>
    </subcellularLocation>
</comment>
<comment type="tissue specificity">
    <text evidence="3">Mostly expressed at low levels in glandular trichomes (lupulin glands) after flowering, and, to a lower extent, in stems, leaves, flowers and cones.</text>
</comment>
<comment type="domain">
    <text evidence="1">Both substrate-binding domains (SBD1 and SBD2) are involved in the substrate recognition, and are sufficient to confer the substrate specificity.</text>
</comment>
<comment type="similarity">
    <text evidence="5">Belongs to the ATP-dependent AMP-binding enzyme family.</text>
</comment>
<sequence>MHLNLKSLCSLTLISQAKTSNPFLSFSNCRPFSSLHSGSANLILMELLKEVAKEGSSASVGVAIRADQKSYSYKQLISSAQRICSLLCSTDLKASHKAGKQVTPALINGLSGHGHLGGARVGIVAKPSAEFVTGVLGTWLSGGVAVPLALSYPEAELLHVMTDSDISMILSTEDHQELMQKIAAKTAAQFSLIPPVPSSCSQEGAVDHLQTGDINTDSILHNTEISNENPALIVYTSGTTGKPKGVVHTHKSINAQVQTLAKAWEYTPADQFLHCLPLHHVHGLFNALFAPLYARSTVEFMPKFSVRGIWQRWRESYPTCETKVDDCITVFTGVPTMYTRLIQGYEAMDPELKEASASAAKQLRLMMCGSSALPIPVMQQWQTITGHRLLERYGMTEFVMAISNPLKGERKAGTVGKPFPGVEVRIVAEDENGSDTTGVGELCVRSPSLFKEYWRLPEVTKSSFTDDGFFKTGDAGKVDEDGYYVILGRTSADIMKVGGYKLSALEIESVLLEHPTVEECCVLGLPDKDYGEAVSAIIVPAAEAKKKGEEESKPAISLEELFSWAQHKLAPYKLPTRLFLWDSLPRNAMGKVNKKELKKKLTVEQGV</sequence>
<proteinExistence type="evidence at transcript level"/>
<gene>
    <name evidence="4" type="primary">CCL8</name>
</gene>
<reference key="1">
    <citation type="journal article" date="2013" name="Mol. Plant">
        <title>Characterization of the formation of branched short-chain fatty acid:CoAs for bitter acid biosynthesis in hop glandular trichomes.</title>
        <authorList>
            <person name="Xu H."/>
            <person name="Zhang F."/>
            <person name="Liu B."/>
            <person name="Huhman D.V."/>
            <person name="Sumner L.W."/>
            <person name="Dixon R.A."/>
            <person name="Wang G."/>
        </authorList>
    </citation>
    <scope>NUCLEOTIDE SEQUENCE [MRNA]</scope>
    <scope>SUBCELLULAR LOCATION</scope>
    <scope>TISSUE SPECIFICITY</scope>
    <scope>GENE FAMILY</scope>
    <scope>NOMENCLATURE</scope>
    <source>
        <strain>cv. Nugget</strain>
    </source>
</reference>